<comment type="similarity">
    <text evidence="1">Belongs to the UPF0102 family.</text>
</comment>
<accession>A0LCU4</accession>
<proteinExistence type="inferred from homology"/>
<reference key="1">
    <citation type="journal article" date="2009" name="Appl. Environ. Microbiol.">
        <title>Complete genome sequence of the chemolithoautotrophic marine magnetotactic coccus strain MC-1.</title>
        <authorList>
            <person name="Schubbe S."/>
            <person name="Williams T.J."/>
            <person name="Xie G."/>
            <person name="Kiss H.E."/>
            <person name="Brettin T.S."/>
            <person name="Martinez D."/>
            <person name="Ross C.A."/>
            <person name="Schuler D."/>
            <person name="Cox B.L."/>
            <person name="Nealson K.H."/>
            <person name="Bazylinski D.A."/>
        </authorList>
    </citation>
    <scope>NUCLEOTIDE SEQUENCE [LARGE SCALE GENOMIC DNA]</scope>
    <source>
        <strain>ATCC BAA-1437 / JCM 17883 / MC-1</strain>
    </source>
</reference>
<protein>
    <recommendedName>
        <fullName evidence="1">UPF0102 protein Mmc1_3298</fullName>
    </recommendedName>
</protein>
<organism>
    <name type="scientific">Magnetococcus marinus (strain ATCC BAA-1437 / JCM 17883 / MC-1)</name>
    <dbReference type="NCBI Taxonomy" id="156889"/>
    <lineage>
        <taxon>Bacteria</taxon>
        <taxon>Pseudomonadati</taxon>
        <taxon>Pseudomonadota</taxon>
        <taxon>Alphaproteobacteria</taxon>
        <taxon>Magnetococcales</taxon>
        <taxon>Magnetococcaceae</taxon>
        <taxon>Magnetococcus</taxon>
    </lineage>
</organism>
<sequence>MGFLTPKSFGEQAEDFACKMMKKKGYHILQRNARSRYGELDIIALHGEVVVFCEVKARQGAVSGSAGEAIDGRKQRQLGRLAEAWRLANPAWMAAPCRFDAVLVAREAQGWHAEIVQDAFQLGW</sequence>
<dbReference type="EMBL" id="CP000471">
    <property type="protein sequence ID" value="ABK45787.1"/>
    <property type="molecule type" value="Genomic_DNA"/>
</dbReference>
<dbReference type="RefSeq" id="WP_011714846.1">
    <property type="nucleotide sequence ID" value="NC_008576.1"/>
</dbReference>
<dbReference type="SMR" id="A0LCU4"/>
<dbReference type="STRING" id="156889.Mmc1_3298"/>
<dbReference type="KEGG" id="mgm:Mmc1_3298"/>
<dbReference type="eggNOG" id="COG0792">
    <property type="taxonomic scope" value="Bacteria"/>
</dbReference>
<dbReference type="HOGENOM" id="CLU_115353_2_1_5"/>
<dbReference type="OrthoDB" id="9812968at2"/>
<dbReference type="Proteomes" id="UP000002586">
    <property type="component" value="Chromosome"/>
</dbReference>
<dbReference type="GO" id="GO:0003676">
    <property type="term" value="F:nucleic acid binding"/>
    <property type="evidence" value="ECO:0007669"/>
    <property type="project" value="InterPro"/>
</dbReference>
<dbReference type="CDD" id="cd20736">
    <property type="entry name" value="PoNe_Nuclease"/>
    <property type="match status" value="1"/>
</dbReference>
<dbReference type="Gene3D" id="3.40.1350.10">
    <property type="match status" value="1"/>
</dbReference>
<dbReference type="HAMAP" id="MF_00048">
    <property type="entry name" value="UPF0102"/>
    <property type="match status" value="1"/>
</dbReference>
<dbReference type="InterPro" id="IPR011335">
    <property type="entry name" value="Restrct_endonuc-II-like"/>
</dbReference>
<dbReference type="InterPro" id="IPR011856">
    <property type="entry name" value="tRNA_endonuc-like_dom_sf"/>
</dbReference>
<dbReference type="InterPro" id="IPR003509">
    <property type="entry name" value="UPF0102_YraN-like"/>
</dbReference>
<dbReference type="NCBIfam" id="NF009150">
    <property type="entry name" value="PRK12497.1-3"/>
    <property type="match status" value="1"/>
</dbReference>
<dbReference type="NCBIfam" id="TIGR00252">
    <property type="entry name" value="YraN family protein"/>
    <property type="match status" value="1"/>
</dbReference>
<dbReference type="PANTHER" id="PTHR34039">
    <property type="entry name" value="UPF0102 PROTEIN YRAN"/>
    <property type="match status" value="1"/>
</dbReference>
<dbReference type="PANTHER" id="PTHR34039:SF1">
    <property type="entry name" value="UPF0102 PROTEIN YRAN"/>
    <property type="match status" value="1"/>
</dbReference>
<dbReference type="Pfam" id="PF02021">
    <property type="entry name" value="UPF0102"/>
    <property type="match status" value="1"/>
</dbReference>
<dbReference type="SUPFAM" id="SSF52980">
    <property type="entry name" value="Restriction endonuclease-like"/>
    <property type="match status" value="1"/>
</dbReference>
<feature type="chain" id="PRO_0000336197" description="UPF0102 protein Mmc1_3298">
    <location>
        <begin position="1"/>
        <end position="124"/>
    </location>
</feature>
<evidence type="ECO:0000255" key="1">
    <source>
        <dbReference type="HAMAP-Rule" id="MF_00048"/>
    </source>
</evidence>
<name>Y3298_MAGMM</name>
<keyword id="KW-1185">Reference proteome</keyword>
<gene>
    <name type="ordered locus">Mmc1_3298</name>
</gene>